<organism>
    <name type="scientific">Listeria monocytogenes serovar 1/2a (strain ATCC BAA-679 / EGD-e)</name>
    <dbReference type="NCBI Taxonomy" id="169963"/>
    <lineage>
        <taxon>Bacteria</taxon>
        <taxon>Bacillati</taxon>
        <taxon>Bacillota</taxon>
        <taxon>Bacilli</taxon>
        <taxon>Bacillales</taxon>
        <taxon>Listeriaceae</taxon>
        <taxon>Listeria</taxon>
    </lineage>
</organism>
<protein>
    <recommendedName>
        <fullName>DNA protection during starvation protein</fullName>
        <ecNumber>1.16.-.-</ecNumber>
    </recommendedName>
    <alternativeName>
        <fullName>Ferritin-like protein</fullName>
    </alternativeName>
    <alternativeName>
        <fullName>Non-heme iron-containing ferritin</fullName>
    </alternativeName>
</protein>
<accession>Q8Y8G1</accession>
<accession>Q9F425</accession>
<name>DPS_LISMO</name>
<gene>
    <name type="primary">dps</name>
    <name type="synonym">flp</name>
    <name type="synonym">fri</name>
    <name type="ordered locus">lmo0943</name>
</gene>
<proteinExistence type="evidence at protein level"/>
<keyword id="KW-0002">3D-structure</keyword>
<keyword id="KW-0963">Cytoplasm</keyword>
<keyword id="KW-0903">Direct protein sequencing</keyword>
<keyword id="KW-0408">Iron</keyword>
<keyword id="KW-0409">Iron storage</keyword>
<keyword id="KW-0479">Metal-binding</keyword>
<keyword id="KW-0560">Oxidoreductase</keyword>
<keyword id="KW-1185">Reference proteome</keyword>
<keyword id="KW-0843">Virulence</keyword>
<evidence type="ECO:0000250" key="1"/>
<evidence type="ECO:0000269" key="2">
    <source>
    </source>
</evidence>
<evidence type="ECO:0000269" key="3">
    <source>
    </source>
</evidence>
<evidence type="ECO:0000269" key="4">
    <source>
    </source>
</evidence>
<evidence type="ECO:0000305" key="5"/>
<evidence type="ECO:0007829" key="6">
    <source>
        <dbReference type="PDB" id="2IY4"/>
    </source>
</evidence>
<comment type="function">
    <text evidence="1 2 3 4">Protects DNA from oxidative damage by sequestering intracellular Fe(2+) ion and storing it in the form of Fe(3+) oxyhydroxide mineral. One hydrogen peroxide oxidizes two Fe(2+) ions, which prevents hydroxyl radical production by the Fenton reaction. Does not bind to DNA (By similarity). Dps is important for full resistance to heat and cold shocks and is essential for full virulence of this bacterium. It seems to play a direct or indirect role on the production and/or stability of listeriolysin O.</text>
</comment>
<comment type="catalytic activity">
    <reaction>
        <text>2 Fe(2+) + H2O2 + 2 H(+) = 2 Fe(3+) + 2 H2O</text>
        <dbReference type="Rhea" id="RHEA:48712"/>
        <dbReference type="ChEBI" id="CHEBI:15377"/>
        <dbReference type="ChEBI" id="CHEBI:15378"/>
        <dbReference type="ChEBI" id="CHEBI:16240"/>
        <dbReference type="ChEBI" id="CHEBI:29033"/>
        <dbReference type="ChEBI" id="CHEBI:29034"/>
    </reaction>
</comment>
<comment type="subunit">
    <text evidence="1">Homododecamer. The 12 subunits form a hollow sphere into which the mineral iron core of up to 500 Fe(3+) can be deposited (By similarity).</text>
</comment>
<comment type="subcellular location">
    <subcellularLocation>
        <location evidence="1">Cytoplasm</location>
    </subcellularLocation>
</comment>
<comment type="induction">
    <text evidence="2">By iron limitation and stationary growth phase.</text>
</comment>
<comment type="domain">
    <text evidence="1">12 di-nuclear ferroxidase centers are located at the interfaces between subunits related by 2-fold symmetry axes.</text>
</comment>
<comment type="similarity">
    <text evidence="5">Belongs to the Dps family.</text>
</comment>
<feature type="chain" id="PRO_0000201658" description="DNA protection during starvation protein">
    <location>
        <begin position="1"/>
        <end position="156"/>
    </location>
</feature>
<feature type="binding site" evidence="1">
    <location>
        <position position="31"/>
    </location>
    <ligand>
        <name>Fe cation</name>
        <dbReference type="ChEBI" id="CHEBI:24875"/>
        <label>1</label>
        <note>ligand shared between two dodecameric partners</note>
    </ligand>
</feature>
<feature type="binding site" description="in other chain" evidence="1">
    <location>
        <position position="58"/>
    </location>
    <ligand>
        <name>Fe cation</name>
        <dbReference type="ChEBI" id="CHEBI:24875"/>
        <label>1</label>
        <note>ligand shared between two dodecameric partners</note>
    </ligand>
</feature>
<feature type="binding site" description="in other chain" evidence="1">
    <location>
        <position position="62"/>
    </location>
    <ligand>
        <name>Fe cation</name>
        <dbReference type="ChEBI" id="CHEBI:24875"/>
        <label>1</label>
        <note>ligand shared between two dodecameric partners</note>
    </ligand>
</feature>
<feature type="binding site" evidence="1">
    <location>
        <position position="62"/>
    </location>
    <ligand>
        <name>Fe cation</name>
        <dbReference type="ChEBI" id="CHEBI:24875"/>
        <label>2</label>
    </ligand>
</feature>
<feature type="sequence conflict" description="In Ref. 2; CAC08216." evidence="5" ref="2">
    <original>V</original>
    <variation>I</variation>
    <location>
        <position position="127"/>
    </location>
</feature>
<feature type="helix" evidence="6">
    <location>
        <begin position="7"/>
        <end position="33"/>
    </location>
</feature>
<feature type="helix" evidence="6">
    <location>
        <begin position="39"/>
        <end position="66"/>
    </location>
</feature>
<feature type="helix" evidence="6">
    <location>
        <begin position="75"/>
        <end position="81"/>
    </location>
</feature>
<feature type="helix" evidence="6">
    <location>
        <begin position="95"/>
        <end position="123"/>
    </location>
</feature>
<feature type="helix" evidence="6">
    <location>
        <begin position="126"/>
        <end position="149"/>
    </location>
</feature>
<sequence>MKTINSVDTKEFLNHQVANLNVFTVKIHQIHWYMRGHNFFTLHEKMDDLYSEFGEQMDEVAERLLAIGGSPFSTLKEFLENASVEEAPYTKPKTMDQLMEDLVGTLELLRDEYQQGIELTDKEGDNVTNDMLIAFKASIDKHIWMFKAFLGKAPLE</sequence>
<dbReference type="EC" id="1.16.-.-"/>
<dbReference type="EMBL" id="AL591977">
    <property type="protein sequence ID" value="CAC99021.1"/>
    <property type="molecule type" value="Genomic_DNA"/>
</dbReference>
<dbReference type="EMBL" id="AJ401090">
    <property type="protein sequence ID" value="CAC08216.1"/>
    <property type="molecule type" value="Genomic_DNA"/>
</dbReference>
<dbReference type="PIR" id="AG1192">
    <property type="entry name" value="AG1192"/>
</dbReference>
<dbReference type="RefSeq" id="NP_464468.1">
    <property type="nucleotide sequence ID" value="NC_003210.1"/>
</dbReference>
<dbReference type="RefSeq" id="WP_003719147.1">
    <property type="nucleotide sequence ID" value="NZ_CP149495.1"/>
</dbReference>
<dbReference type="PDB" id="2IY4">
    <property type="method" value="X-ray"/>
    <property type="resolution" value="2.31 A"/>
    <property type="chains" value="A/B/C/D/E/F/G/H/I/J/K/L/M/N/O/P/Q/R/S/T/U/V/X/Y=1-156"/>
</dbReference>
<dbReference type="PDBsum" id="2IY4"/>
<dbReference type="SMR" id="Q8Y8G1"/>
<dbReference type="STRING" id="169963.gene:17593599"/>
<dbReference type="PaxDb" id="169963-lmo0943"/>
<dbReference type="EnsemblBacteria" id="CAC99021">
    <property type="protein sequence ID" value="CAC99021"/>
    <property type="gene ID" value="CAC99021"/>
</dbReference>
<dbReference type="GeneID" id="57075870"/>
<dbReference type="GeneID" id="986847"/>
<dbReference type="KEGG" id="lmo:lmo0943"/>
<dbReference type="PATRIC" id="fig|169963.11.peg.970"/>
<dbReference type="eggNOG" id="COG0783">
    <property type="taxonomic scope" value="Bacteria"/>
</dbReference>
<dbReference type="HOGENOM" id="CLU_098183_4_0_9"/>
<dbReference type="OrthoDB" id="9797023at2"/>
<dbReference type="PhylomeDB" id="Q8Y8G1"/>
<dbReference type="BioCyc" id="LMON169963:LMO0943-MONOMER"/>
<dbReference type="EvolutionaryTrace" id="Q8Y8G1"/>
<dbReference type="Proteomes" id="UP000000817">
    <property type="component" value="Chromosome"/>
</dbReference>
<dbReference type="GO" id="GO:0005737">
    <property type="term" value="C:cytoplasm"/>
    <property type="evidence" value="ECO:0007669"/>
    <property type="project" value="UniProtKB-SubCell"/>
</dbReference>
<dbReference type="GO" id="GO:0008199">
    <property type="term" value="F:ferric iron binding"/>
    <property type="evidence" value="ECO:0007669"/>
    <property type="project" value="InterPro"/>
</dbReference>
<dbReference type="GO" id="GO:0016722">
    <property type="term" value="F:oxidoreductase activity, acting on metal ions"/>
    <property type="evidence" value="ECO:0007669"/>
    <property type="project" value="InterPro"/>
</dbReference>
<dbReference type="GO" id="GO:0006879">
    <property type="term" value="P:intracellular iron ion homeostasis"/>
    <property type="evidence" value="ECO:0007669"/>
    <property type="project" value="UniProtKB-KW"/>
</dbReference>
<dbReference type="CDD" id="cd01043">
    <property type="entry name" value="DPS"/>
    <property type="match status" value="1"/>
</dbReference>
<dbReference type="Gene3D" id="1.20.1260.10">
    <property type="match status" value="1"/>
</dbReference>
<dbReference type="InterPro" id="IPR002177">
    <property type="entry name" value="DPS_DNA-bd"/>
</dbReference>
<dbReference type="InterPro" id="IPR023188">
    <property type="entry name" value="DPS_DNA-bd_CS"/>
</dbReference>
<dbReference type="InterPro" id="IPR012347">
    <property type="entry name" value="Ferritin-like"/>
</dbReference>
<dbReference type="InterPro" id="IPR009078">
    <property type="entry name" value="Ferritin-like_SF"/>
</dbReference>
<dbReference type="InterPro" id="IPR008331">
    <property type="entry name" value="Ferritin_DPS_dom"/>
</dbReference>
<dbReference type="PANTHER" id="PTHR42932">
    <property type="entry name" value="GENERAL STRESS PROTEIN 20U"/>
    <property type="match status" value="1"/>
</dbReference>
<dbReference type="PANTHER" id="PTHR42932:SF1">
    <property type="entry name" value="GENERAL STRESS PROTEIN 20U"/>
    <property type="match status" value="1"/>
</dbReference>
<dbReference type="Pfam" id="PF00210">
    <property type="entry name" value="Ferritin"/>
    <property type="match status" value="1"/>
</dbReference>
<dbReference type="PIRSF" id="PIRSF005900">
    <property type="entry name" value="Dps"/>
    <property type="match status" value="1"/>
</dbReference>
<dbReference type="PRINTS" id="PR01346">
    <property type="entry name" value="HELNAPAPROT"/>
</dbReference>
<dbReference type="SUPFAM" id="SSF47240">
    <property type="entry name" value="Ferritin-like"/>
    <property type="match status" value="1"/>
</dbReference>
<dbReference type="PROSITE" id="PS00818">
    <property type="entry name" value="DPS_1"/>
    <property type="match status" value="1"/>
</dbReference>
<dbReference type="PROSITE" id="PS00819">
    <property type="entry name" value="DPS_2"/>
    <property type="match status" value="1"/>
</dbReference>
<reference key="1">
    <citation type="journal article" date="2001" name="Science">
        <title>Comparative genomics of Listeria species.</title>
        <authorList>
            <person name="Glaser P."/>
            <person name="Frangeul L."/>
            <person name="Buchrieser C."/>
            <person name="Rusniok C."/>
            <person name="Amend A."/>
            <person name="Baquero F."/>
            <person name="Berche P."/>
            <person name="Bloecker H."/>
            <person name="Brandt P."/>
            <person name="Chakraborty T."/>
            <person name="Charbit A."/>
            <person name="Chetouani F."/>
            <person name="Couve E."/>
            <person name="de Daruvar A."/>
            <person name="Dehoux P."/>
            <person name="Domann E."/>
            <person name="Dominguez-Bernal G."/>
            <person name="Duchaud E."/>
            <person name="Durant L."/>
            <person name="Dussurget O."/>
            <person name="Entian K.-D."/>
            <person name="Fsihi H."/>
            <person name="Garcia-del Portillo F."/>
            <person name="Garrido P."/>
            <person name="Gautier L."/>
            <person name="Goebel W."/>
            <person name="Gomez-Lopez N."/>
            <person name="Hain T."/>
            <person name="Hauf J."/>
            <person name="Jackson D."/>
            <person name="Jones L.-M."/>
            <person name="Kaerst U."/>
            <person name="Kreft J."/>
            <person name="Kuhn M."/>
            <person name="Kunst F."/>
            <person name="Kurapkat G."/>
            <person name="Madueno E."/>
            <person name="Maitournam A."/>
            <person name="Mata Vicente J."/>
            <person name="Ng E."/>
            <person name="Nedjari H."/>
            <person name="Nordsiek G."/>
            <person name="Novella S."/>
            <person name="de Pablos B."/>
            <person name="Perez-Diaz J.-C."/>
            <person name="Purcell R."/>
            <person name="Remmel B."/>
            <person name="Rose M."/>
            <person name="Schlueter T."/>
            <person name="Simoes N."/>
            <person name="Tierrez A."/>
            <person name="Vazquez-Boland J.-A."/>
            <person name="Voss H."/>
            <person name="Wehland J."/>
            <person name="Cossart P."/>
        </authorList>
    </citation>
    <scope>NUCLEOTIDE SEQUENCE [LARGE SCALE GENOMIC DNA]</scope>
    <source>
        <strain>ATCC BAA-679 / EGD-e</strain>
    </source>
</reference>
<reference key="2">
    <citation type="journal article" date="2000" name="FEMS Microbiol. Lett.">
        <title>The main cold shock protein of Listeria monocytogenes belongs to the family of ferritin-like proteins.</title>
        <authorList>
            <person name="Hebraud M."/>
            <person name="Guzzo J."/>
        </authorList>
    </citation>
    <scope>NUCLEOTIDE SEQUENCE [GENOMIC DNA] OF 11-147</scope>
    <scope>PROTEIN SEQUENCE OF 1-22</scope>
    <source>
        <strain>LO28 / Serovar 1/2c</strain>
    </source>
</reference>
<reference key="3">
    <citation type="journal article" date="2002" name="Gene">
        <title>The expression of the dodecameric ferritin in Listeria spp. is induced by iron limitation and stationary growth phase.</title>
        <authorList>
            <person name="Polidoro M."/>
            <person name="De Biase D."/>
            <person name="Montagnini B."/>
            <person name="Guarrera L."/>
            <person name="Cavallo S."/>
            <person name="Valenti P."/>
            <person name="Stefanini S."/>
            <person name="Chiancone E."/>
        </authorList>
    </citation>
    <scope>FUNCTION</scope>
    <scope>INDUCTION</scope>
    <source>
        <strain>LM1</strain>
    </source>
</reference>
<reference key="4">
    <citation type="journal article" date="2005" name="FEMS Microbiol. Lett.">
        <title>Listeria monocytogenes ferritin protects against multiple stresses and is required for virulence.</title>
        <authorList>
            <person name="Dussurget O."/>
            <person name="Dumas E."/>
            <person name="Archambaud C."/>
            <person name="Chafsey I."/>
            <person name="Chambon C."/>
            <person name="Hebraud M."/>
            <person name="Cossart P."/>
        </authorList>
    </citation>
    <scope>FUNCTION IN PROTECTION AGAINST MULTIPLE STRESSES</scope>
    <scope>REQUIREMENT FOR VIRULENCE</scope>
    <source>
        <strain>ATCC BAA-679 / EGD-e</strain>
    </source>
</reference>
<reference key="5">
    <citation type="journal article" date="2005" name="Microbiology">
        <title>The Dps-like protein Fri of Listeria monocytogenes promotes stress tolerance and intracellular multiplication in macrophage-like cells.</title>
        <authorList>
            <person name="Olsen K.N."/>
            <person name="Larsen M.H."/>
            <person name="Gahan C.G."/>
            <person name="Kallipolitis B."/>
            <person name="Wolf X.A."/>
            <person name="Rea R."/>
            <person name="Hill C."/>
            <person name="Ingmer H."/>
        </authorList>
    </citation>
    <scope>FUNCTION</scope>
    <source>
        <strain>ATCC BAA-679 / EGD-e</strain>
    </source>
</reference>